<gene>
    <name evidence="1" type="primary">truA1</name>
    <name type="ordered locus">pc0328</name>
</gene>
<accession>Q6MEE7</accession>
<comment type="function">
    <text evidence="1">Formation of pseudouridine at positions 38, 39 and 40 in the anticodon stem and loop of transfer RNAs.</text>
</comment>
<comment type="catalytic activity">
    <reaction evidence="1">
        <text>uridine(38/39/40) in tRNA = pseudouridine(38/39/40) in tRNA</text>
        <dbReference type="Rhea" id="RHEA:22376"/>
        <dbReference type="Rhea" id="RHEA-COMP:10085"/>
        <dbReference type="Rhea" id="RHEA-COMP:10087"/>
        <dbReference type="ChEBI" id="CHEBI:65314"/>
        <dbReference type="ChEBI" id="CHEBI:65315"/>
        <dbReference type="EC" id="5.4.99.12"/>
    </reaction>
</comment>
<comment type="subunit">
    <text evidence="1">Homodimer.</text>
</comment>
<comment type="similarity">
    <text evidence="1">Belongs to the tRNA pseudouridine synthase TruA family.</text>
</comment>
<feature type="chain" id="PRO_0000057425" description="tRNA pseudouridine synthase A 1">
    <location>
        <begin position="1"/>
        <end position="256"/>
    </location>
</feature>
<feature type="active site" description="Nucleophile" evidence="1">
    <location>
        <position position="53"/>
    </location>
</feature>
<feature type="binding site" evidence="1">
    <location>
        <position position="111"/>
    </location>
    <ligand>
        <name>substrate</name>
    </ligand>
</feature>
<protein>
    <recommendedName>
        <fullName evidence="1">tRNA pseudouridine synthase A 1</fullName>
        <ecNumber evidence="1">5.4.99.12</ecNumber>
    </recommendedName>
    <alternativeName>
        <fullName evidence="1">tRNA pseudouridine(38-40) synthase</fullName>
    </alternativeName>
    <alternativeName>
        <fullName evidence="1">tRNA pseudouridylate synthase I 1</fullName>
    </alternativeName>
    <alternativeName>
        <fullName evidence="1">tRNA-uridine isomerase I 1</fullName>
    </alternativeName>
</protein>
<keyword id="KW-0413">Isomerase</keyword>
<keyword id="KW-1185">Reference proteome</keyword>
<keyword id="KW-0819">tRNA processing</keyword>
<sequence>MHCYKLTIAYDGTNYSGWQIQPNASSIQQKIQEALCILLKKEKVVLVGSGRTDAGVHAKGQVAHFHFQDYIDLSRLHVSLNGLLPRDIRIKAVEPVSPRFHSQYSAIRKEYHYYLHLNKVMDPFQRLYSWHFQRKIDVNILKKAAILFTGTHDFTSFANEAHRGTAAKNPVRTLYRLDIKPNEGGLRLEFEGDGFLYKMVRNIVGTLMDVASHKRAIEEINQIFAAKNRRQASLAAPPEGLFLIQVFYENENGCLD</sequence>
<dbReference type="EC" id="5.4.99.12" evidence="1"/>
<dbReference type="EMBL" id="BX908798">
    <property type="protein sequence ID" value="CAF23052.1"/>
    <property type="molecule type" value="Genomic_DNA"/>
</dbReference>
<dbReference type="RefSeq" id="WP_011174878.1">
    <property type="nucleotide sequence ID" value="NC_005861.2"/>
</dbReference>
<dbReference type="SMR" id="Q6MEE7"/>
<dbReference type="STRING" id="264201.pc0328"/>
<dbReference type="KEGG" id="pcu:PC_RS01600"/>
<dbReference type="eggNOG" id="COG0101">
    <property type="taxonomic scope" value="Bacteria"/>
</dbReference>
<dbReference type="HOGENOM" id="CLU_014673_0_1_0"/>
<dbReference type="OrthoDB" id="9811823at2"/>
<dbReference type="Proteomes" id="UP000000529">
    <property type="component" value="Chromosome"/>
</dbReference>
<dbReference type="GO" id="GO:0003723">
    <property type="term" value="F:RNA binding"/>
    <property type="evidence" value="ECO:0007669"/>
    <property type="project" value="InterPro"/>
</dbReference>
<dbReference type="GO" id="GO:0160147">
    <property type="term" value="F:tRNA pseudouridine(38-40) synthase activity"/>
    <property type="evidence" value="ECO:0007669"/>
    <property type="project" value="UniProtKB-EC"/>
</dbReference>
<dbReference type="GO" id="GO:0031119">
    <property type="term" value="P:tRNA pseudouridine synthesis"/>
    <property type="evidence" value="ECO:0007669"/>
    <property type="project" value="UniProtKB-UniRule"/>
</dbReference>
<dbReference type="CDD" id="cd02570">
    <property type="entry name" value="PseudoU_synth_EcTruA"/>
    <property type="match status" value="1"/>
</dbReference>
<dbReference type="FunFam" id="3.30.70.580:FF:000001">
    <property type="entry name" value="tRNA pseudouridine synthase A"/>
    <property type="match status" value="1"/>
</dbReference>
<dbReference type="Gene3D" id="3.30.70.660">
    <property type="entry name" value="Pseudouridine synthase I, catalytic domain, C-terminal subdomain"/>
    <property type="match status" value="1"/>
</dbReference>
<dbReference type="Gene3D" id="3.30.70.580">
    <property type="entry name" value="Pseudouridine synthase I, catalytic domain, N-terminal subdomain"/>
    <property type="match status" value="1"/>
</dbReference>
<dbReference type="HAMAP" id="MF_00171">
    <property type="entry name" value="TruA"/>
    <property type="match status" value="1"/>
</dbReference>
<dbReference type="InterPro" id="IPR020103">
    <property type="entry name" value="PsdUridine_synth_cat_dom_sf"/>
</dbReference>
<dbReference type="InterPro" id="IPR001406">
    <property type="entry name" value="PsdUridine_synth_TruA"/>
</dbReference>
<dbReference type="InterPro" id="IPR020097">
    <property type="entry name" value="PsdUridine_synth_TruA_a/b_dom"/>
</dbReference>
<dbReference type="InterPro" id="IPR020095">
    <property type="entry name" value="PsdUridine_synth_TruA_C"/>
</dbReference>
<dbReference type="InterPro" id="IPR020094">
    <property type="entry name" value="TruA/RsuA/RluB/E/F_N"/>
</dbReference>
<dbReference type="NCBIfam" id="TIGR00071">
    <property type="entry name" value="hisT_truA"/>
    <property type="match status" value="1"/>
</dbReference>
<dbReference type="PANTHER" id="PTHR11142">
    <property type="entry name" value="PSEUDOURIDYLATE SYNTHASE"/>
    <property type="match status" value="1"/>
</dbReference>
<dbReference type="PANTHER" id="PTHR11142:SF0">
    <property type="entry name" value="TRNA PSEUDOURIDINE SYNTHASE-LIKE 1"/>
    <property type="match status" value="1"/>
</dbReference>
<dbReference type="Pfam" id="PF01416">
    <property type="entry name" value="PseudoU_synth_1"/>
    <property type="match status" value="2"/>
</dbReference>
<dbReference type="PIRSF" id="PIRSF001430">
    <property type="entry name" value="tRNA_psdUrid_synth"/>
    <property type="match status" value="1"/>
</dbReference>
<dbReference type="SUPFAM" id="SSF55120">
    <property type="entry name" value="Pseudouridine synthase"/>
    <property type="match status" value="1"/>
</dbReference>
<proteinExistence type="inferred from homology"/>
<reference key="1">
    <citation type="journal article" date="2004" name="Science">
        <title>Illuminating the evolutionary history of chlamydiae.</title>
        <authorList>
            <person name="Horn M."/>
            <person name="Collingro A."/>
            <person name="Schmitz-Esser S."/>
            <person name="Beier C.L."/>
            <person name="Purkhold U."/>
            <person name="Fartmann B."/>
            <person name="Brandt P."/>
            <person name="Nyakatura G.J."/>
            <person name="Droege M."/>
            <person name="Frishman D."/>
            <person name="Rattei T."/>
            <person name="Mewes H.-W."/>
            <person name="Wagner M."/>
        </authorList>
    </citation>
    <scope>NUCLEOTIDE SEQUENCE [LARGE SCALE GENOMIC DNA]</scope>
    <source>
        <strain>UWE25</strain>
    </source>
</reference>
<evidence type="ECO:0000255" key="1">
    <source>
        <dbReference type="HAMAP-Rule" id="MF_00171"/>
    </source>
</evidence>
<organism>
    <name type="scientific">Protochlamydia amoebophila (strain UWE25)</name>
    <dbReference type="NCBI Taxonomy" id="264201"/>
    <lineage>
        <taxon>Bacteria</taxon>
        <taxon>Pseudomonadati</taxon>
        <taxon>Chlamydiota</taxon>
        <taxon>Chlamydiia</taxon>
        <taxon>Parachlamydiales</taxon>
        <taxon>Parachlamydiaceae</taxon>
        <taxon>Candidatus Protochlamydia</taxon>
    </lineage>
</organism>
<name>TRUA1_PARUW</name>